<reference key="1">
    <citation type="journal article" date="1994" name="J. Virol.">
        <title>Nucleotide sequence of human adenovirus type 12 DNA: comparative functional analysis.</title>
        <authorList>
            <person name="Sprengel J."/>
            <person name="Schmitz B."/>
            <person name="Heuss-Neitzel D."/>
            <person name="Zock C."/>
            <person name="Doerfler W."/>
        </authorList>
    </citation>
    <scope>NUCLEOTIDE SEQUENCE [LARGE SCALE GENOMIC DNA]</scope>
</reference>
<sequence>MVTVLLIFLCLPVIFSSSTFAAVSDLDPECLAPFAVYLIFTFVTATCVCSIITLLITSLQFFDYYYVRIVYRRHHPRYQNPQIAALLQLQP</sequence>
<organismHost>
    <name type="scientific">Homo sapiens</name>
    <name type="common">Human</name>
    <dbReference type="NCBI Taxonomy" id="9606"/>
</organismHost>
<organism>
    <name type="scientific">Human adenovirus A serotype 12</name>
    <name type="common">HAdV-12</name>
    <name type="synonym">Human adenovirus 12</name>
    <dbReference type="NCBI Taxonomy" id="28282"/>
    <lineage>
        <taxon>Viruses</taxon>
        <taxon>Varidnaviria</taxon>
        <taxon>Bamfordvirae</taxon>
        <taxon>Preplasmiviricota</taxon>
        <taxon>Tectiliviricetes</taxon>
        <taxon>Rowavirales</taxon>
        <taxon>Adenoviridae</taxon>
        <taxon>Mastadenovirus</taxon>
        <taxon>Human mastadenovirus A</taxon>
    </lineage>
</organism>
<keyword id="KW-0244">Early protein</keyword>
<keyword id="KW-1038">Host endoplasmic reticulum</keyword>
<keyword id="KW-1043">Host membrane</keyword>
<keyword id="KW-0472">Membrane</keyword>
<keyword id="KW-1185">Reference proteome</keyword>
<keyword id="KW-0732">Signal</keyword>
<keyword id="KW-0812">Transmembrane</keyword>
<keyword id="KW-1133">Transmembrane helix</keyword>
<name>E310_ADE12</name>
<proteinExistence type="inferred from homology"/>
<comment type="function">
    <text>Down-regulates the EGF receptor.</text>
</comment>
<comment type="subcellular location">
    <subcellularLocation>
        <location evidence="3">Host endoplasmic reticulum membrane</location>
        <topology evidence="3">Single-pass type I membrane protein</topology>
    </subcellularLocation>
</comment>
<comment type="similarity">
    <text evidence="3">Belongs to the adenoviridae E3B family.</text>
</comment>
<accession>P36705</accession>
<evidence type="ECO:0000250" key="1"/>
<evidence type="ECO:0000255" key="2"/>
<evidence type="ECO:0000305" key="3"/>
<protein>
    <recommendedName>
        <fullName>Early E3B 10.4 kDa protein</fullName>
    </recommendedName>
</protein>
<feature type="signal peptide" evidence="1">
    <location>
        <begin position="1"/>
        <end position="21"/>
    </location>
</feature>
<feature type="chain" id="PRO_0000036475" description="Early E3B 10.4 kDa protein">
    <location>
        <begin position="22"/>
        <end position="91"/>
    </location>
</feature>
<feature type="topological domain" description="Lumenal" evidence="2">
    <location>
        <begin position="22"/>
        <end position="33"/>
    </location>
</feature>
<feature type="transmembrane region" description="Helical" evidence="2">
    <location>
        <begin position="34"/>
        <end position="56"/>
    </location>
</feature>
<feature type="topological domain" description="Cytoplasmic" evidence="2">
    <location>
        <begin position="57"/>
        <end position="91"/>
    </location>
</feature>
<dbReference type="EMBL" id="X73487">
    <property type="protein sequence ID" value="CAA51897.1"/>
    <property type="molecule type" value="Genomic_DNA"/>
</dbReference>
<dbReference type="PIR" id="S33948">
    <property type="entry name" value="S33948"/>
</dbReference>
<dbReference type="RefSeq" id="NP_040930.1">
    <property type="nucleotide sequence ID" value="NC_001460.1"/>
</dbReference>
<dbReference type="SMR" id="P36705"/>
<dbReference type="DNASU" id="1460862"/>
<dbReference type="GeneID" id="1460862"/>
<dbReference type="Proteomes" id="UP000004993">
    <property type="component" value="Genome"/>
</dbReference>
<dbReference type="GO" id="GO:0044167">
    <property type="term" value="C:host cell endoplasmic reticulum membrane"/>
    <property type="evidence" value="ECO:0007669"/>
    <property type="project" value="UniProtKB-SubCell"/>
</dbReference>
<dbReference type="GO" id="GO:0016020">
    <property type="term" value="C:membrane"/>
    <property type="evidence" value="ECO:0007669"/>
    <property type="project" value="UniProtKB-KW"/>
</dbReference>
<dbReference type="InterPro" id="IPR005041">
    <property type="entry name" value="Adeno_E3B"/>
</dbReference>
<dbReference type="Pfam" id="PF03376">
    <property type="entry name" value="Adeno_E3B"/>
    <property type="match status" value="1"/>
</dbReference>